<organism>
    <name type="scientific">Bacillus subtilis (strain 168)</name>
    <dbReference type="NCBI Taxonomy" id="224308"/>
    <lineage>
        <taxon>Bacteria</taxon>
        <taxon>Bacillati</taxon>
        <taxon>Bacillota</taxon>
        <taxon>Bacilli</taxon>
        <taxon>Bacillales</taxon>
        <taxon>Bacillaceae</taxon>
        <taxon>Bacillus</taxon>
    </lineage>
</organism>
<dbReference type="EMBL" id="D88802">
    <property type="protein sequence ID" value="BAA19706.1"/>
    <property type="molecule type" value="Genomic_DNA"/>
</dbReference>
<dbReference type="EMBL" id="AL009126">
    <property type="protein sequence ID" value="CAB12401.2"/>
    <property type="molecule type" value="Genomic_DNA"/>
</dbReference>
<dbReference type="PIR" id="B69785">
    <property type="entry name" value="B69785"/>
</dbReference>
<dbReference type="RefSeq" id="NP_388463.2">
    <property type="nucleotide sequence ID" value="NC_000964.3"/>
</dbReference>
<dbReference type="RefSeq" id="WP_003243550.1">
    <property type="nucleotide sequence ID" value="NZ_OZ025638.1"/>
</dbReference>
<dbReference type="SMR" id="O05506"/>
<dbReference type="FunCoup" id="O05506">
    <property type="interactions" value="108"/>
</dbReference>
<dbReference type="STRING" id="224308.BSU05820"/>
<dbReference type="TCDB" id="4.A.3.2.10">
    <property type="family name" value="the pts lactose-n,n'-diacetylchitobiose-Beta-glucoside (lac) family"/>
</dbReference>
<dbReference type="PaxDb" id="224308-BSU05820"/>
<dbReference type="EnsemblBacteria" id="CAB12401">
    <property type="protein sequence ID" value="CAB12401"/>
    <property type="gene ID" value="BSU_05820"/>
</dbReference>
<dbReference type="GeneID" id="938039"/>
<dbReference type="KEGG" id="bsu:BSU05820"/>
<dbReference type="PATRIC" id="fig|224308.179.peg.626"/>
<dbReference type="eggNOG" id="COG1447">
    <property type="taxonomic scope" value="Bacteria"/>
</dbReference>
<dbReference type="InParanoid" id="O05506"/>
<dbReference type="OrthoDB" id="350602at2"/>
<dbReference type="PhylomeDB" id="O05506"/>
<dbReference type="BioCyc" id="BSUB:BSU05820-MONOMER"/>
<dbReference type="Proteomes" id="UP000001570">
    <property type="component" value="Chromosome"/>
</dbReference>
<dbReference type="GO" id="GO:0005737">
    <property type="term" value="C:cytoplasm"/>
    <property type="evidence" value="ECO:0007669"/>
    <property type="project" value="UniProtKB-SubCell"/>
</dbReference>
<dbReference type="GO" id="GO:0016301">
    <property type="term" value="F:kinase activity"/>
    <property type="evidence" value="ECO:0007669"/>
    <property type="project" value="UniProtKB-KW"/>
</dbReference>
<dbReference type="GO" id="GO:0090563">
    <property type="term" value="F:protein-phosphocysteine-sugar phosphotransferase activity"/>
    <property type="evidence" value="ECO:0000318"/>
    <property type="project" value="GO_Central"/>
</dbReference>
<dbReference type="GO" id="GO:0009401">
    <property type="term" value="P:phosphoenolpyruvate-dependent sugar phosphotransferase system"/>
    <property type="evidence" value="ECO:0000318"/>
    <property type="project" value="GO_Central"/>
</dbReference>
<dbReference type="GO" id="GO:0015774">
    <property type="term" value="P:polysaccharide transport"/>
    <property type="evidence" value="ECO:0007669"/>
    <property type="project" value="UniProtKB-KW"/>
</dbReference>
<dbReference type="CDD" id="cd00215">
    <property type="entry name" value="PTS_IIA_lac"/>
    <property type="match status" value="1"/>
</dbReference>
<dbReference type="Gene3D" id="1.20.58.80">
    <property type="entry name" value="Phosphotransferase system, lactose/cellobiose-type IIA subunit"/>
    <property type="match status" value="1"/>
</dbReference>
<dbReference type="InterPro" id="IPR003188">
    <property type="entry name" value="PTS_IIA_lac/cel"/>
</dbReference>
<dbReference type="InterPro" id="IPR036542">
    <property type="entry name" value="PTS_IIA_lac/cel_sf"/>
</dbReference>
<dbReference type="PANTHER" id="PTHR34382">
    <property type="entry name" value="PTS SYSTEM N,N'-DIACETYLCHITOBIOSE-SPECIFIC EIIA COMPONENT"/>
    <property type="match status" value="1"/>
</dbReference>
<dbReference type="PANTHER" id="PTHR34382:SF10">
    <property type="entry name" value="PTS SYSTEM OLIGO-BETA-MANNOSIDE-SPECIFIC EIIA COMPONENT"/>
    <property type="match status" value="1"/>
</dbReference>
<dbReference type="Pfam" id="PF02255">
    <property type="entry name" value="PTS_IIA"/>
    <property type="match status" value="1"/>
</dbReference>
<dbReference type="PIRSF" id="PIRSF000699">
    <property type="entry name" value="PTS_IILac_III"/>
    <property type="match status" value="1"/>
</dbReference>
<dbReference type="SUPFAM" id="SSF46973">
    <property type="entry name" value="Enzyme IIa from lactose specific PTS, IIa-lac"/>
    <property type="match status" value="1"/>
</dbReference>
<dbReference type="PROSITE" id="PS51095">
    <property type="entry name" value="PTS_EIIA_TYPE_3"/>
    <property type="match status" value="1"/>
</dbReference>
<gene>
    <name evidence="3" type="primary">gmuA</name>
    <name type="synonym">ydhN</name>
    <name type="ordered locus">BSU05820</name>
</gene>
<protein>
    <recommendedName>
        <fullName evidence="3">PTS system oligo-beta-mannoside-specific EIIA component</fullName>
    </recommendedName>
    <alternativeName>
        <fullName evidence="3">Glucomannan utilization protein A</fullName>
    </alternativeName>
    <alternativeName>
        <fullName evidence="3">Oligo-beta-mannoside-specific phosphotransferase enzyme IIA component</fullName>
    </alternativeName>
</protein>
<feature type="chain" id="PRO_0000372433" description="PTS system oligo-beta-mannoside-specific EIIA component">
    <location>
        <begin position="1"/>
        <end position="110"/>
    </location>
</feature>
<feature type="domain" description="PTS EIIA type-3" evidence="1">
    <location>
        <begin position="9"/>
        <end position="107"/>
    </location>
</feature>
<feature type="active site" description="Tele-phosphohistidine intermediate" evidence="4">
    <location>
        <position position="83"/>
    </location>
</feature>
<feature type="modified residue" description="Phosphohistidine; by HPr" evidence="1">
    <location>
        <position position="83"/>
    </location>
</feature>
<feature type="sequence conflict" description="In Ref. 1; BAA19706." evidence="4" ref="1">
    <original>D</original>
    <variation>G</variation>
    <location>
        <position position="11"/>
    </location>
</feature>
<accession>O05506</accession>
<accession>Q797E1</accession>
<comment type="function">
    <text evidence="5">The phosphoenolpyruvate-dependent sugar phosphotransferase system (sugar PTS), a major carbohydrate active transport system, catalyzes the phosphorylation of incoming sugar substrates concomitantly with their translocation across the cell membrane. The enzyme II GmuABC PTS system is involved in the transport of oligo-glucomannans such as cellobiose or mannobiose.</text>
</comment>
<comment type="subcellular location">
    <subcellularLocation>
        <location evidence="4">Cytoplasm</location>
    </subcellularLocation>
</comment>
<comment type="induction">
    <text evidence="2">Up-regulated by konjac glucomannan and by cellobiose and mannobiose, the possible degradation products of glucomannan. Repressed by glucose via the carbon catabolite repression system. Also repressed by GmuR.</text>
</comment>
<comment type="domain">
    <text evidence="1">The PTS EIIA type-3 domain is phosphorylated by phospho-HPr on a histidyl residue. Then, it transfers the phosphoryl group to the PTS EIIB type-3 domain.</text>
</comment>
<reference key="1">
    <citation type="journal article" date="1997" name="Microbiology">
        <title>Nucleotide sequence and analysis of the phoB-rrnE-groESL region of the Bacillus subtilis chromosome.</title>
        <authorList>
            <person name="Sadaie Y."/>
            <person name="Yata K."/>
            <person name="Fujita M."/>
            <person name="Sagai H."/>
            <person name="Itaya M."/>
            <person name="Kasahara Y."/>
            <person name="Ogasawara N."/>
        </authorList>
    </citation>
    <scope>NUCLEOTIDE SEQUENCE [GENOMIC DNA]</scope>
    <source>
        <strain>168 / JH642</strain>
    </source>
</reference>
<reference key="2">
    <citation type="journal article" date="1997" name="Nature">
        <title>The complete genome sequence of the Gram-positive bacterium Bacillus subtilis.</title>
        <authorList>
            <person name="Kunst F."/>
            <person name="Ogasawara N."/>
            <person name="Moszer I."/>
            <person name="Albertini A.M."/>
            <person name="Alloni G."/>
            <person name="Azevedo V."/>
            <person name="Bertero M.G."/>
            <person name="Bessieres P."/>
            <person name="Bolotin A."/>
            <person name="Borchert S."/>
            <person name="Borriss R."/>
            <person name="Boursier L."/>
            <person name="Brans A."/>
            <person name="Braun M."/>
            <person name="Brignell S.C."/>
            <person name="Bron S."/>
            <person name="Brouillet S."/>
            <person name="Bruschi C.V."/>
            <person name="Caldwell B."/>
            <person name="Capuano V."/>
            <person name="Carter N.M."/>
            <person name="Choi S.-K."/>
            <person name="Codani J.-J."/>
            <person name="Connerton I.F."/>
            <person name="Cummings N.J."/>
            <person name="Daniel R.A."/>
            <person name="Denizot F."/>
            <person name="Devine K.M."/>
            <person name="Duesterhoeft A."/>
            <person name="Ehrlich S.D."/>
            <person name="Emmerson P.T."/>
            <person name="Entian K.-D."/>
            <person name="Errington J."/>
            <person name="Fabret C."/>
            <person name="Ferrari E."/>
            <person name="Foulger D."/>
            <person name="Fritz C."/>
            <person name="Fujita M."/>
            <person name="Fujita Y."/>
            <person name="Fuma S."/>
            <person name="Galizzi A."/>
            <person name="Galleron N."/>
            <person name="Ghim S.-Y."/>
            <person name="Glaser P."/>
            <person name="Goffeau A."/>
            <person name="Golightly E.J."/>
            <person name="Grandi G."/>
            <person name="Guiseppi G."/>
            <person name="Guy B.J."/>
            <person name="Haga K."/>
            <person name="Haiech J."/>
            <person name="Harwood C.R."/>
            <person name="Henaut A."/>
            <person name="Hilbert H."/>
            <person name="Holsappel S."/>
            <person name="Hosono S."/>
            <person name="Hullo M.-F."/>
            <person name="Itaya M."/>
            <person name="Jones L.-M."/>
            <person name="Joris B."/>
            <person name="Karamata D."/>
            <person name="Kasahara Y."/>
            <person name="Klaerr-Blanchard M."/>
            <person name="Klein C."/>
            <person name="Kobayashi Y."/>
            <person name="Koetter P."/>
            <person name="Koningstein G."/>
            <person name="Krogh S."/>
            <person name="Kumano M."/>
            <person name="Kurita K."/>
            <person name="Lapidus A."/>
            <person name="Lardinois S."/>
            <person name="Lauber J."/>
            <person name="Lazarevic V."/>
            <person name="Lee S.-M."/>
            <person name="Levine A."/>
            <person name="Liu H."/>
            <person name="Masuda S."/>
            <person name="Mauel C."/>
            <person name="Medigue C."/>
            <person name="Medina N."/>
            <person name="Mellado R.P."/>
            <person name="Mizuno M."/>
            <person name="Moestl D."/>
            <person name="Nakai S."/>
            <person name="Noback M."/>
            <person name="Noone D."/>
            <person name="O'Reilly M."/>
            <person name="Ogawa K."/>
            <person name="Ogiwara A."/>
            <person name="Oudega B."/>
            <person name="Park S.-H."/>
            <person name="Parro V."/>
            <person name="Pohl T.M."/>
            <person name="Portetelle D."/>
            <person name="Porwollik S."/>
            <person name="Prescott A.M."/>
            <person name="Presecan E."/>
            <person name="Pujic P."/>
            <person name="Purnelle B."/>
            <person name="Rapoport G."/>
            <person name="Rey M."/>
            <person name="Reynolds S."/>
            <person name="Rieger M."/>
            <person name="Rivolta C."/>
            <person name="Rocha E."/>
            <person name="Roche B."/>
            <person name="Rose M."/>
            <person name="Sadaie Y."/>
            <person name="Sato T."/>
            <person name="Scanlan E."/>
            <person name="Schleich S."/>
            <person name="Schroeter R."/>
            <person name="Scoffone F."/>
            <person name="Sekiguchi J."/>
            <person name="Sekowska A."/>
            <person name="Seror S.J."/>
            <person name="Serror P."/>
            <person name="Shin B.-S."/>
            <person name="Soldo B."/>
            <person name="Sorokin A."/>
            <person name="Tacconi E."/>
            <person name="Takagi T."/>
            <person name="Takahashi H."/>
            <person name="Takemaru K."/>
            <person name="Takeuchi M."/>
            <person name="Tamakoshi A."/>
            <person name="Tanaka T."/>
            <person name="Terpstra P."/>
            <person name="Tognoni A."/>
            <person name="Tosato V."/>
            <person name="Uchiyama S."/>
            <person name="Vandenbol M."/>
            <person name="Vannier F."/>
            <person name="Vassarotti A."/>
            <person name="Viari A."/>
            <person name="Wambutt R."/>
            <person name="Wedler E."/>
            <person name="Wedler H."/>
            <person name="Weitzenegger T."/>
            <person name="Winters P."/>
            <person name="Wipat A."/>
            <person name="Yamamoto H."/>
            <person name="Yamane K."/>
            <person name="Yasumoto K."/>
            <person name="Yata K."/>
            <person name="Yoshida K."/>
            <person name="Yoshikawa H.-F."/>
            <person name="Zumstein E."/>
            <person name="Yoshikawa H."/>
            <person name="Danchin A."/>
        </authorList>
    </citation>
    <scope>NUCLEOTIDE SEQUENCE [LARGE SCALE GENOMIC DNA]</scope>
    <source>
        <strain>168</strain>
    </source>
</reference>
<reference key="3">
    <citation type="journal article" date="2009" name="Microbiology">
        <title>From a consortium sequence to a unified sequence: the Bacillus subtilis 168 reference genome a decade later.</title>
        <authorList>
            <person name="Barbe V."/>
            <person name="Cruveiller S."/>
            <person name="Kunst F."/>
            <person name="Lenoble P."/>
            <person name="Meurice G."/>
            <person name="Sekowska A."/>
            <person name="Vallenet D."/>
            <person name="Wang T."/>
            <person name="Moszer I."/>
            <person name="Medigue C."/>
            <person name="Danchin A."/>
        </authorList>
    </citation>
    <scope>SEQUENCE REVISION TO 11</scope>
</reference>
<reference key="4">
    <citation type="journal article" date="2008" name="FEMS Microbiol. Lett.">
        <title>Glucomannan utilization operon of Bacillus subtilis.</title>
        <authorList>
            <person name="Sadaie Y."/>
            <person name="Nakadate H."/>
            <person name="Fukui R."/>
            <person name="Yee L.M."/>
            <person name="Asai K."/>
        </authorList>
    </citation>
    <scope>FUNCTION IN GLUCOMANNAN UTILIZATION</scope>
    <scope>CATALYTIC ACTIVITY</scope>
    <scope>INDUCTION</scope>
    <source>
        <strain>168</strain>
    </source>
</reference>
<name>PTEA_BACSU</name>
<evidence type="ECO:0000255" key="1">
    <source>
        <dbReference type="PROSITE-ProRule" id="PRU00418"/>
    </source>
</evidence>
<evidence type="ECO:0000269" key="2">
    <source>
    </source>
</evidence>
<evidence type="ECO:0000303" key="3">
    <source>
    </source>
</evidence>
<evidence type="ECO:0000305" key="4"/>
<evidence type="ECO:0000305" key="5">
    <source>
    </source>
</evidence>
<sequence>MEQMKITNLTDEQISFQLILHSGNARSCIIQSLRAYKEGKKDEADALIAKAEQDLSAAHDIHFQMIQKESGGEATAFSLLLMHAEDHLMSTLSMKELVKEMLDLFKTKNI</sequence>
<proteinExistence type="evidence at protein level"/>
<keyword id="KW-0963">Cytoplasm</keyword>
<keyword id="KW-0418">Kinase</keyword>
<keyword id="KW-0597">Phosphoprotein</keyword>
<keyword id="KW-0598">Phosphotransferase system</keyword>
<keyword id="KW-0625">Polysaccharide transport</keyword>
<keyword id="KW-1185">Reference proteome</keyword>
<keyword id="KW-0762">Sugar transport</keyword>
<keyword id="KW-0808">Transferase</keyword>
<keyword id="KW-0813">Transport</keyword>